<dbReference type="EC" id="2.3.1.31" evidence="1 2"/>
<dbReference type="EMBL" id="AE007869">
    <property type="protein sequence ID" value="AAK88436.2"/>
    <property type="molecule type" value="Genomic_DNA"/>
</dbReference>
<dbReference type="RefSeq" id="NP_355651.2">
    <property type="nucleotide sequence ID" value="NC_003062.2"/>
</dbReference>
<dbReference type="RefSeq" id="WP_010972516.1">
    <property type="nucleotide sequence ID" value="NC_003062.2"/>
</dbReference>
<dbReference type="SMR" id="Q7CWE8"/>
<dbReference type="STRING" id="176299.Atu2718"/>
<dbReference type="DNASU" id="1134756"/>
<dbReference type="EnsemblBacteria" id="AAK88436">
    <property type="protein sequence ID" value="AAK88436"/>
    <property type="gene ID" value="Atu2718"/>
</dbReference>
<dbReference type="GeneID" id="1134756"/>
<dbReference type="KEGG" id="atu:Atu2718"/>
<dbReference type="PATRIC" id="fig|176299.10.peg.2726"/>
<dbReference type="eggNOG" id="COG1897">
    <property type="taxonomic scope" value="Bacteria"/>
</dbReference>
<dbReference type="HOGENOM" id="CLU_057851_0_1_5"/>
<dbReference type="OrthoDB" id="9772423at2"/>
<dbReference type="PhylomeDB" id="Q7CWE8"/>
<dbReference type="BioCyc" id="AGRO:ATU2718-MONOMER"/>
<dbReference type="BioCyc" id="MetaCyc:MONOMER-17841"/>
<dbReference type="UniPathway" id="UPA00051">
    <property type="reaction ID" value="UER00074"/>
</dbReference>
<dbReference type="Proteomes" id="UP000000813">
    <property type="component" value="Chromosome circular"/>
</dbReference>
<dbReference type="GO" id="GO:0005737">
    <property type="term" value="C:cytoplasm"/>
    <property type="evidence" value="ECO:0007669"/>
    <property type="project" value="UniProtKB-SubCell"/>
</dbReference>
<dbReference type="GO" id="GO:0004414">
    <property type="term" value="F:homoserine O-acetyltransferase activity"/>
    <property type="evidence" value="ECO:0007669"/>
    <property type="project" value="UniProtKB-EC"/>
</dbReference>
<dbReference type="GO" id="GO:0008899">
    <property type="term" value="F:homoserine O-succinyltransferase activity"/>
    <property type="evidence" value="ECO:0007669"/>
    <property type="project" value="UniProtKB-UniRule"/>
</dbReference>
<dbReference type="GO" id="GO:0019281">
    <property type="term" value="P:L-methionine biosynthetic process from homoserine via O-succinyl-L-homoserine and cystathionine"/>
    <property type="evidence" value="ECO:0007669"/>
    <property type="project" value="InterPro"/>
</dbReference>
<dbReference type="CDD" id="cd03131">
    <property type="entry name" value="GATase1_HTS"/>
    <property type="match status" value="1"/>
</dbReference>
<dbReference type="Gene3D" id="3.40.50.880">
    <property type="match status" value="1"/>
</dbReference>
<dbReference type="HAMAP" id="MF_00295">
    <property type="entry name" value="MetA_acyltransf"/>
    <property type="match status" value="1"/>
</dbReference>
<dbReference type="InterPro" id="IPR029062">
    <property type="entry name" value="Class_I_gatase-like"/>
</dbReference>
<dbReference type="InterPro" id="IPR005697">
    <property type="entry name" value="HST_MetA"/>
</dbReference>
<dbReference type="InterPro" id="IPR033752">
    <property type="entry name" value="MetA_family"/>
</dbReference>
<dbReference type="NCBIfam" id="TIGR01001">
    <property type="entry name" value="metA"/>
    <property type="match status" value="1"/>
</dbReference>
<dbReference type="PANTHER" id="PTHR20919">
    <property type="entry name" value="HOMOSERINE O-SUCCINYLTRANSFERASE"/>
    <property type="match status" value="1"/>
</dbReference>
<dbReference type="PANTHER" id="PTHR20919:SF0">
    <property type="entry name" value="HOMOSERINE O-SUCCINYLTRANSFERASE"/>
    <property type="match status" value="1"/>
</dbReference>
<dbReference type="Pfam" id="PF04204">
    <property type="entry name" value="HTS"/>
    <property type="match status" value="1"/>
</dbReference>
<dbReference type="PIRSF" id="PIRSF000450">
    <property type="entry name" value="H_ser_succinyltr"/>
    <property type="match status" value="1"/>
</dbReference>
<dbReference type="SUPFAM" id="SSF52317">
    <property type="entry name" value="Class I glutamine amidotransferase-like"/>
    <property type="match status" value="1"/>
</dbReference>
<reference key="1">
    <citation type="journal article" date="2001" name="Science">
        <title>Genome sequence of the plant pathogen and biotechnology agent Agrobacterium tumefaciens C58.</title>
        <authorList>
            <person name="Goodner B."/>
            <person name="Hinkle G."/>
            <person name="Gattung S."/>
            <person name="Miller N."/>
            <person name="Blanchard M."/>
            <person name="Qurollo B."/>
            <person name="Goldman B.S."/>
            <person name="Cao Y."/>
            <person name="Askenazi M."/>
            <person name="Halling C."/>
            <person name="Mullin L."/>
            <person name="Houmiel K."/>
            <person name="Gordon J."/>
            <person name="Vaudin M."/>
            <person name="Iartchouk O."/>
            <person name="Epp A."/>
            <person name="Liu F."/>
            <person name="Wollam C."/>
            <person name="Allinger M."/>
            <person name="Doughty D."/>
            <person name="Scott C."/>
            <person name="Lappas C."/>
            <person name="Markelz B."/>
            <person name="Flanagan C."/>
            <person name="Crowell C."/>
            <person name="Gurson J."/>
            <person name="Lomo C."/>
            <person name="Sear C."/>
            <person name="Strub G."/>
            <person name="Cielo C."/>
            <person name="Slater S."/>
        </authorList>
    </citation>
    <scope>NUCLEOTIDE SEQUENCE [LARGE SCALE GENOMIC DNA]</scope>
    <source>
        <strain>C58 / ATCC 33970</strain>
    </source>
</reference>
<reference key="2">
    <citation type="journal article" date="2001" name="Science">
        <title>The genome of the natural genetic engineer Agrobacterium tumefaciens C58.</title>
        <authorList>
            <person name="Wood D.W."/>
            <person name="Setubal J.C."/>
            <person name="Kaul R."/>
            <person name="Monks D.E."/>
            <person name="Kitajima J.P."/>
            <person name="Okura V.K."/>
            <person name="Zhou Y."/>
            <person name="Chen L."/>
            <person name="Wood G.E."/>
            <person name="Almeida N.F. Jr."/>
            <person name="Woo L."/>
            <person name="Chen Y."/>
            <person name="Paulsen I.T."/>
            <person name="Eisen J.A."/>
            <person name="Karp P.D."/>
            <person name="Bovee D. Sr."/>
            <person name="Chapman P."/>
            <person name="Clendenning J."/>
            <person name="Deatherage G."/>
            <person name="Gillet W."/>
            <person name="Grant C."/>
            <person name="Kutyavin T."/>
            <person name="Levy R."/>
            <person name="Li M.-J."/>
            <person name="McClelland E."/>
            <person name="Palmieri A."/>
            <person name="Raymond C."/>
            <person name="Rouse G."/>
            <person name="Saenphimmachak C."/>
            <person name="Wu Z."/>
            <person name="Romero P."/>
            <person name="Gordon D."/>
            <person name="Zhang S."/>
            <person name="Yoo H."/>
            <person name="Tao Y."/>
            <person name="Biddle P."/>
            <person name="Jung M."/>
            <person name="Krespan W."/>
            <person name="Perry M."/>
            <person name="Gordon-Kamm B."/>
            <person name="Liao L."/>
            <person name="Kim S."/>
            <person name="Hendrick C."/>
            <person name="Zhao Z.-Y."/>
            <person name="Dolan M."/>
            <person name="Chumley F."/>
            <person name="Tingey S.V."/>
            <person name="Tomb J.-F."/>
            <person name="Gordon M.P."/>
            <person name="Olson M.V."/>
            <person name="Nester E.W."/>
        </authorList>
    </citation>
    <scope>NUCLEOTIDE SEQUENCE [LARGE SCALE GENOMIC DNA]</scope>
    <source>
        <strain>C58 / ATCC 33970</strain>
    </source>
</reference>
<reference key="3">
    <citation type="journal article" date="2013" name="Res. Microbiol.">
        <title>Methionine biosynthesis in Agrobacterium tumefaciens: study of the first enzyme.</title>
        <authorList>
            <person name="Rotem O."/>
            <person name="Biran D."/>
            <person name="Ron E.Z."/>
        </authorList>
    </citation>
    <scope>FUNCTION</scope>
    <scope>CATALYTIC ACTIVITY</scope>
    <scope>PATHWAY</scope>
    <scope>INDUCTION</scope>
    <source>
        <strain>C58 / ATCC 33970</strain>
    </source>
</reference>
<organism>
    <name type="scientific">Agrobacterium fabrum (strain C58 / ATCC 33970)</name>
    <name type="common">Agrobacterium tumefaciens (strain C58)</name>
    <dbReference type="NCBI Taxonomy" id="176299"/>
    <lineage>
        <taxon>Bacteria</taxon>
        <taxon>Pseudomonadati</taxon>
        <taxon>Pseudomonadota</taxon>
        <taxon>Alphaproteobacteria</taxon>
        <taxon>Hyphomicrobiales</taxon>
        <taxon>Rhizobiaceae</taxon>
        <taxon>Rhizobium/Agrobacterium group</taxon>
        <taxon>Agrobacterium</taxon>
        <taxon>Agrobacterium tumefaciens complex</taxon>
    </lineage>
</organism>
<protein>
    <recommendedName>
        <fullName evidence="1 4">Homoserine O-acetyltransferase</fullName>
        <shortName evidence="1 4">HAT</shortName>
        <ecNumber evidence="1 2">2.3.1.31</ecNumber>
    </recommendedName>
    <alternativeName>
        <fullName evidence="1 3">Homoserine transacetylase</fullName>
        <shortName evidence="1 4">HTA</shortName>
    </alternativeName>
</protein>
<gene>
    <name evidence="1" type="primary">metAA</name>
    <name evidence="3" type="synonym">metA</name>
    <name type="ordered locus">Atu2718</name>
    <name type="ORF">AGR_C_4927</name>
</gene>
<keyword id="KW-0012">Acyltransferase</keyword>
<keyword id="KW-0028">Amino-acid biosynthesis</keyword>
<keyword id="KW-0963">Cytoplasm</keyword>
<keyword id="KW-0486">Methionine biosynthesis</keyword>
<keyword id="KW-1185">Reference proteome</keyword>
<keyword id="KW-0808">Transferase</keyword>
<proteinExistence type="evidence at protein level"/>
<feature type="chain" id="PRO_1000059288" description="Homoserine O-acetyltransferase">
    <location>
        <begin position="1"/>
        <end position="308"/>
    </location>
</feature>
<feature type="active site" description="Acyl-thioester intermediate" evidence="1">
    <location>
        <position position="142"/>
    </location>
</feature>
<feature type="active site" description="Proton acceptor" evidence="1">
    <location>
        <position position="235"/>
    </location>
</feature>
<feature type="active site" evidence="1">
    <location>
        <position position="237"/>
    </location>
</feature>
<feature type="binding site" evidence="1">
    <location>
        <position position="163"/>
    </location>
    <ligand>
        <name>substrate</name>
    </ligand>
</feature>
<feature type="binding site" evidence="1">
    <location>
        <position position="192"/>
    </location>
    <ligand>
        <name>substrate</name>
    </ligand>
</feature>
<feature type="binding site" evidence="1">
    <location>
        <position position="249"/>
    </location>
    <ligand>
        <name>substrate</name>
    </ligand>
</feature>
<feature type="site" description="Important for acyl-CoA specificity" evidence="1">
    <location>
        <position position="111"/>
    </location>
</feature>
<feature type="site" description="Important for substrate specificity" evidence="1">
    <location>
        <position position="192"/>
    </location>
</feature>
<comment type="function">
    <text evidence="1 2">Transfers an acetyl group from acetyl-CoA to L-homoserine, forming acetyl-L-homoserine.</text>
</comment>
<comment type="catalytic activity">
    <reaction evidence="1 2">
        <text>L-homoserine + acetyl-CoA = O-acetyl-L-homoserine + CoA</text>
        <dbReference type="Rhea" id="RHEA:13701"/>
        <dbReference type="ChEBI" id="CHEBI:57287"/>
        <dbReference type="ChEBI" id="CHEBI:57288"/>
        <dbReference type="ChEBI" id="CHEBI:57476"/>
        <dbReference type="ChEBI" id="CHEBI:57716"/>
        <dbReference type="EC" id="2.3.1.31"/>
    </reaction>
</comment>
<comment type="pathway">
    <text evidence="1 5">Amino-acid biosynthesis; L-methionine biosynthesis via de novo pathway; O-acetyl-L-homoserine from L-homoserine: step 1/1.</text>
</comment>
<comment type="subcellular location">
    <subcellularLocation>
        <location evidence="1">Cytoplasm</location>
    </subcellularLocation>
</comment>
<comment type="induction">
    <text evidence="2">Induced by elevated temperatures via the sigma-32 factor RpoH. Repressed by a SAM riboswitch, which is also effective when transcription is sigma-32-mediated.</text>
</comment>
<comment type="similarity">
    <text evidence="1">Belongs to the MetA family.</text>
</comment>
<name>METAA_AGRFC</name>
<accession>Q7CWE8</accession>
<evidence type="ECO:0000255" key="1">
    <source>
        <dbReference type="HAMAP-Rule" id="MF_00295"/>
    </source>
</evidence>
<evidence type="ECO:0000269" key="2">
    <source>
    </source>
</evidence>
<evidence type="ECO:0000303" key="3">
    <source>
    </source>
</evidence>
<evidence type="ECO:0000305" key="4"/>
<evidence type="ECO:0000305" key="5">
    <source>
    </source>
</evidence>
<sequence length="308" mass="35691">MPIKIPDTLPAFETLVHEGVRVMTETAAIRQDIRPLQIGLLNLMPNKIKTEIQMARLVGASPLQVELSLIRIGGHRAKNTPEEHLLSFYQTWEEVRHRKFDGFIITGAPIELLDYEDVTYWNEMQQIFEWTQTNVHSTLNVCWGAMAAIYHFHGVPKYELKEKAFGVYRHRNLSPSSIYLNGFSDDFQVPVSRWTEVRRADIEKHPELEILMESDEMGVCLAHEKAGNRLYMFNHVEYDSTSLADEYFRDVNSGVPIKLPHDYFPHNDPELAPLNRWRSHAHLFFGNWINEIYQTTPYDPQAIGKLAA</sequence>